<name>RCI2B_ARATH</name>
<keyword id="KW-0472">Membrane</keyword>
<keyword id="KW-1185">Reference proteome</keyword>
<keyword id="KW-0812">Transmembrane</keyword>
<keyword id="KW-1133">Transmembrane helix</keyword>
<sequence length="54" mass="6082">MSTATFVEIILAIILPPLGVFLKFGCKVEFWICLILTLFGYLPGILYALYIITK</sequence>
<comment type="subcellular location">
    <subcellularLocation>
        <location evidence="2">Membrane</location>
        <topology evidence="2">Multi-pass membrane protein</topology>
    </subcellularLocation>
</comment>
<comment type="induction">
    <text>By low temperature. Also promoted by abscisic acid (ABA) and dehydration but is not a general response to stress conditions.</text>
</comment>
<comment type="similarity">
    <text evidence="2">Belongs to the UPF0057 (PMP3) family.</text>
</comment>
<comment type="sequence caution" evidence="2">
    <conflict type="erroneous gene model prediction">
        <sequence resource="EMBL-CDS" id="AAF26091"/>
    </conflict>
</comment>
<protein>
    <recommendedName>
        <fullName>Hydrophobic protein RCI2B</fullName>
    </recommendedName>
    <alternativeName>
        <fullName>Low temperature and salt-responsive protein LTI6B</fullName>
    </alternativeName>
</protein>
<feature type="chain" id="PRO_0000193973" description="Hydrophobic protein RCI2B">
    <location>
        <begin position="1"/>
        <end position="54"/>
    </location>
</feature>
<feature type="transmembrane region" description="Helical" evidence="1">
    <location>
        <begin position="2"/>
        <end position="22"/>
    </location>
</feature>
<feature type="transmembrane region" description="Helical" evidence="1">
    <location>
        <begin position="32"/>
        <end position="52"/>
    </location>
</feature>
<reference key="1">
    <citation type="journal article" date="1997" name="Plant Physiol.">
        <title>Two homologous low-temperature-inducible genes from Arabidopsis encode highly hydrophobic proteins.</title>
        <authorList>
            <person name="Capel J."/>
            <person name="Jarillo J.A."/>
            <person name="Salinas J."/>
            <person name="Martinez-Zapater J.M."/>
        </authorList>
    </citation>
    <scope>NUCLEOTIDE SEQUENCE</scope>
    <source>
        <strain>cv. Columbia</strain>
    </source>
</reference>
<reference key="2">
    <citation type="submission" date="1998-11" db="EMBL/GenBank/DDBJ databases">
        <title>Isolation and characterization of two homologous low temperature and salt responsive genes in Arabidopsis thaliana.</title>
        <authorList>
            <person name="Nylander M."/>
            <person name="Helenius E."/>
            <person name="Lindgren O."/>
            <person name="Baudo M.M."/>
            <person name="Heino P."/>
        </authorList>
    </citation>
    <scope>NUCLEOTIDE SEQUENCE</scope>
</reference>
<reference key="3">
    <citation type="journal article" date="2001" name="Plant Physiol.">
        <title>Developmental and stress regulation of RCI2A and RCI2B, two cold-inducible genes of Arabidopsis encoding highly conserved hydrophobic proteins.</title>
        <authorList>
            <person name="Medina J."/>
            <person name="Catala R."/>
            <person name="Salinas J."/>
        </authorList>
    </citation>
    <scope>NUCLEOTIDE SEQUENCE</scope>
    <source>
        <strain>cv. Columbia</strain>
    </source>
</reference>
<reference key="4">
    <citation type="journal article" date="2000" name="Nature">
        <title>Sequence and analysis of chromosome 3 of the plant Arabidopsis thaliana.</title>
        <authorList>
            <person name="Salanoubat M."/>
            <person name="Lemcke K."/>
            <person name="Rieger M."/>
            <person name="Ansorge W."/>
            <person name="Unseld M."/>
            <person name="Fartmann B."/>
            <person name="Valle G."/>
            <person name="Bloecker H."/>
            <person name="Perez-Alonso M."/>
            <person name="Obermaier B."/>
            <person name="Delseny M."/>
            <person name="Boutry M."/>
            <person name="Grivell L.A."/>
            <person name="Mache R."/>
            <person name="Puigdomenech P."/>
            <person name="De Simone V."/>
            <person name="Choisne N."/>
            <person name="Artiguenave F."/>
            <person name="Robert C."/>
            <person name="Brottier P."/>
            <person name="Wincker P."/>
            <person name="Cattolico L."/>
            <person name="Weissenbach J."/>
            <person name="Saurin W."/>
            <person name="Quetier F."/>
            <person name="Schaefer M."/>
            <person name="Mueller-Auer S."/>
            <person name="Gabel C."/>
            <person name="Fuchs M."/>
            <person name="Benes V."/>
            <person name="Wurmbach E."/>
            <person name="Drzonek H."/>
            <person name="Erfle H."/>
            <person name="Jordan N."/>
            <person name="Bangert S."/>
            <person name="Wiedelmann R."/>
            <person name="Kranz H."/>
            <person name="Voss H."/>
            <person name="Holland R."/>
            <person name="Brandt P."/>
            <person name="Nyakatura G."/>
            <person name="Vezzi A."/>
            <person name="D'Angelo M."/>
            <person name="Pallavicini A."/>
            <person name="Toppo S."/>
            <person name="Simionati B."/>
            <person name="Conrad A."/>
            <person name="Hornischer K."/>
            <person name="Kauer G."/>
            <person name="Loehnert T.-H."/>
            <person name="Nordsiek G."/>
            <person name="Reichelt J."/>
            <person name="Scharfe M."/>
            <person name="Schoen O."/>
            <person name="Bargues M."/>
            <person name="Terol J."/>
            <person name="Climent J."/>
            <person name="Navarro P."/>
            <person name="Collado C."/>
            <person name="Perez-Perez A."/>
            <person name="Ottenwaelder B."/>
            <person name="Duchemin D."/>
            <person name="Cooke R."/>
            <person name="Laudie M."/>
            <person name="Berger-Llauro C."/>
            <person name="Purnelle B."/>
            <person name="Masuy D."/>
            <person name="de Haan M."/>
            <person name="Maarse A.C."/>
            <person name="Alcaraz J.-P."/>
            <person name="Cottet A."/>
            <person name="Casacuberta E."/>
            <person name="Monfort A."/>
            <person name="Argiriou A."/>
            <person name="Flores M."/>
            <person name="Liguori R."/>
            <person name="Vitale D."/>
            <person name="Mannhaupt G."/>
            <person name="Haase D."/>
            <person name="Schoof H."/>
            <person name="Rudd S."/>
            <person name="Zaccaria P."/>
            <person name="Mewes H.-W."/>
            <person name="Mayer K.F.X."/>
            <person name="Kaul S."/>
            <person name="Town C.D."/>
            <person name="Koo H.L."/>
            <person name="Tallon L.J."/>
            <person name="Jenkins J."/>
            <person name="Rooney T."/>
            <person name="Rizzo M."/>
            <person name="Walts A."/>
            <person name="Utterback T."/>
            <person name="Fujii C.Y."/>
            <person name="Shea T.P."/>
            <person name="Creasy T.H."/>
            <person name="Haas B."/>
            <person name="Maiti R."/>
            <person name="Wu D."/>
            <person name="Peterson J."/>
            <person name="Van Aken S."/>
            <person name="Pai G."/>
            <person name="Militscher J."/>
            <person name="Sellers P."/>
            <person name="Gill J.E."/>
            <person name="Feldblyum T.V."/>
            <person name="Preuss D."/>
            <person name="Lin X."/>
            <person name="Nierman W.C."/>
            <person name="Salzberg S.L."/>
            <person name="White O."/>
            <person name="Venter J.C."/>
            <person name="Fraser C.M."/>
            <person name="Kaneko T."/>
            <person name="Nakamura Y."/>
            <person name="Sato S."/>
            <person name="Kato T."/>
            <person name="Asamizu E."/>
            <person name="Sasamoto S."/>
            <person name="Kimura T."/>
            <person name="Idesawa K."/>
            <person name="Kawashima K."/>
            <person name="Kishida Y."/>
            <person name="Kiyokawa C."/>
            <person name="Kohara M."/>
            <person name="Matsumoto M."/>
            <person name="Matsuno A."/>
            <person name="Muraki A."/>
            <person name="Nakayama S."/>
            <person name="Nakazaki N."/>
            <person name="Shinpo S."/>
            <person name="Takeuchi C."/>
            <person name="Wada T."/>
            <person name="Watanabe A."/>
            <person name="Yamada M."/>
            <person name="Yasuda M."/>
            <person name="Tabata S."/>
        </authorList>
    </citation>
    <scope>NUCLEOTIDE SEQUENCE [LARGE SCALE GENOMIC DNA]</scope>
    <source>
        <strain>cv. Columbia</strain>
    </source>
</reference>
<reference key="5">
    <citation type="journal article" date="2017" name="Plant J.">
        <title>Araport11: a complete reannotation of the Arabidopsis thaliana reference genome.</title>
        <authorList>
            <person name="Cheng C.Y."/>
            <person name="Krishnakumar V."/>
            <person name="Chan A.P."/>
            <person name="Thibaud-Nissen F."/>
            <person name="Schobel S."/>
            <person name="Town C.D."/>
        </authorList>
    </citation>
    <scope>GENOME REANNOTATION</scope>
    <source>
        <strain>cv. Columbia</strain>
    </source>
</reference>
<reference key="6">
    <citation type="submission" date="2002-03" db="EMBL/GenBank/DDBJ databases">
        <title>Full-length cDNA from Arabidopsis thaliana.</title>
        <authorList>
            <person name="Brover V.V."/>
            <person name="Troukhan M.E."/>
            <person name="Alexandrov N.A."/>
            <person name="Lu Y.-P."/>
            <person name="Flavell R.B."/>
            <person name="Feldmann K.A."/>
        </authorList>
    </citation>
    <scope>NUCLEOTIDE SEQUENCE [LARGE SCALE MRNA]</scope>
</reference>
<proteinExistence type="evidence at transcript level"/>
<dbReference type="EMBL" id="AF122006">
    <property type="protein sequence ID" value="AAD17303.1"/>
    <property type="molecule type" value="mRNA"/>
</dbReference>
<dbReference type="EMBL" id="AF104221">
    <property type="protein sequence ID" value="AAC97511.1"/>
    <property type="molecule type" value="Genomic_DNA"/>
</dbReference>
<dbReference type="EMBL" id="AF264749">
    <property type="protein sequence ID" value="AAK50618.1"/>
    <property type="molecule type" value="Genomic_DNA"/>
</dbReference>
<dbReference type="EMBL" id="AC012393">
    <property type="protein sequence ID" value="AAF26091.1"/>
    <property type="status" value="ALT_SEQ"/>
    <property type="molecule type" value="Genomic_DNA"/>
</dbReference>
<dbReference type="EMBL" id="AC013454">
    <property type="protein sequence ID" value="AAF23227.1"/>
    <property type="molecule type" value="Genomic_DNA"/>
</dbReference>
<dbReference type="EMBL" id="CP002686">
    <property type="protein sequence ID" value="AEE74312.1"/>
    <property type="molecule type" value="Genomic_DNA"/>
</dbReference>
<dbReference type="EMBL" id="AY084701">
    <property type="protein sequence ID" value="AAM61275.1"/>
    <property type="molecule type" value="mRNA"/>
</dbReference>
<dbReference type="RefSeq" id="NP_187240.1">
    <property type="nucleotide sequence ID" value="NM_111463.2"/>
</dbReference>
<dbReference type="SMR" id="Q9ZNS6"/>
<dbReference type="FunCoup" id="Q9ZNS6">
    <property type="interactions" value="65"/>
</dbReference>
<dbReference type="STRING" id="3702.Q9ZNS6"/>
<dbReference type="PaxDb" id="3702-AT3G05890.1"/>
<dbReference type="EnsemblPlants" id="AT3G05890.1">
    <property type="protein sequence ID" value="AT3G05890.1"/>
    <property type="gene ID" value="AT3G05890"/>
</dbReference>
<dbReference type="GeneID" id="819758"/>
<dbReference type="Gramene" id="AT3G05890.1">
    <property type="protein sequence ID" value="AT3G05890.1"/>
    <property type="gene ID" value="AT3G05890"/>
</dbReference>
<dbReference type="KEGG" id="ath:AT3G05890"/>
<dbReference type="Araport" id="AT3G05890"/>
<dbReference type="TAIR" id="AT3G05890">
    <property type="gene designation" value="RCI2B"/>
</dbReference>
<dbReference type="eggNOG" id="KOG1773">
    <property type="taxonomic scope" value="Eukaryota"/>
</dbReference>
<dbReference type="HOGENOM" id="CLU_107649_6_0_1"/>
<dbReference type="InParanoid" id="Q9ZNS6"/>
<dbReference type="OMA" id="EKGCDYH"/>
<dbReference type="OrthoDB" id="2802411at2759"/>
<dbReference type="PhylomeDB" id="Q9ZNS6"/>
<dbReference type="PRO" id="PR:Q9ZNS6"/>
<dbReference type="Proteomes" id="UP000006548">
    <property type="component" value="Chromosome 3"/>
</dbReference>
<dbReference type="ExpressionAtlas" id="Q9ZNS6">
    <property type="expression patterns" value="baseline and differential"/>
</dbReference>
<dbReference type="GO" id="GO:0016020">
    <property type="term" value="C:membrane"/>
    <property type="evidence" value="ECO:0007669"/>
    <property type="project" value="UniProtKB-SubCell"/>
</dbReference>
<dbReference type="GO" id="GO:0009409">
    <property type="term" value="P:response to cold"/>
    <property type="evidence" value="ECO:0000315"/>
    <property type="project" value="TAIR"/>
</dbReference>
<dbReference type="InterPro" id="IPR000612">
    <property type="entry name" value="PMP3"/>
</dbReference>
<dbReference type="PANTHER" id="PTHR21659">
    <property type="entry name" value="HYDROPHOBIC PROTEIN RCI2 LOW TEMPERATURE AND SALT RESPONSIVE PROTEIN LTI6 -RELATED"/>
    <property type="match status" value="1"/>
</dbReference>
<dbReference type="PANTHER" id="PTHR21659:SF73">
    <property type="entry name" value="HYDROPHOBIC PROTEIN RCI2B"/>
    <property type="match status" value="1"/>
</dbReference>
<dbReference type="Pfam" id="PF01679">
    <property type="entry name" value="Pmp3"/>
    <property type="match status" value="1"/>
</dbReference>
<dbReference type="PROSITE" id="PS01309">
    <property type="entry name" value="UPF0057"/>
    <property type="match status" value="1"/>
</dbReference>
<organism>
    <name type="scientific">Arabidopsis thaliana</name>
    <name type="common">Mouse-ear cress</name>
    <dbReference type="NCBI Taxonomy" id="3702"/>
    <lineage>
        <taxon>Eukaryota</taxon>
        <taxon>Viridiplantae</taxon>
        <taxon>Streptophyta</taxon>
        <taxon>Embryophyta</taxon>
        <taxon>Tracheophyta</taxon>
        <taxon>Spermatophyta</taxon>
        <taxon>Magnoliopsida</taxon>
        <taxon>eudicotyledons</taxon>
        <taxon>Gunneridae</taxon>
        <taxon>Pentapetalae</taxon>
        <taxon>rosids</taxon>
        <taxon>malvids</taxon>
        <taxon>Brassicales</taxon>
        <taxon>Brassicaceae</taxon>
        <taxon>Camelineae</taxon>
        <taxon>Arabidopsis</taxon>
    </lineage>
</organism>
<evidence type="ECO:0000255" key="1"/>
<evidence type="ECO:0000305" key="2"/>
<gene>
    <name type="primary">RCI2B</name>
    <name type="synonym">LTI6B</name>
    <name type="ordered locus">At3g05890</name>
    <name type="ORF">F10A16.19</name>
    <name type="ORF">F2O10.15</name>
</gene>
<accession>Q9ZNS6</accession>
<accession>Q9M9K9</accession>